<comment type="function">
    <text evidence="1 2">Catalytic component of the signal peptidase complex (SPC) which catalyzes the cleavage of N-terminal signal sequences from nascent proteins as they are translocated into the lumen of the endoplasmic reticulum (By similarity). Specifically cleaves N-terminal signal peptides that contain a hydrophobic alpha-helix (h-region) shorter than 18-20 amino acids (By similarity).</text>
</comment>
<comment type="catalytic activity">
    <reaction evidence="1">
        <text>Cleavage of hydrophobic, N-terminal signal or leader sequences from secreted and periplasmic proteins.</text>
        <dbReference type="EC" id="3.4.21.89"/>
    </reaction>
</comment>
<comment type="subunit">
    <text evidence="1 2">Component of the signal peptidase complex (SPC) composed of a catalytic subunit SEC11 and three accessory subunits SPC1, SPC2 and SPC3 (By similarity). The complex induces a local thinning of the ER membrane which is used to measure the length of the signal peptide (SP) h-region of protein substrates. This ensures the selectivity of the complex towards h-regions shorter than 18-20 amino acids (By similarity). SPC associates with the translocon complex (By similarity).</text>
</comment>
<comment type="subcellular location">
    <subcellularLocation>
        <location evidence="1">Endoplasmic reticulum membrane</location>
        <topology evidence="1">Single-pass type II membrane protein</topology>
    </subcellularLocation>
</comment>
<comment type="domain">
    <text evidence="2">The C-terminal short (CTS) helix is essential for catalytic activity. It may be accommodated as a transmembrane helix in the thinned membrane environment of the complex, similarly to the signal peptide in the complex substrates.</text>
</comment>
<comment type="similarity">
    <text evidence="4">Belongs to the peptidase S26B family.</text>
</comment>
<feature type="chain" id="PRO_0000412338" description="Signal peptidase complex catalytic subunit SEC11">
    <location>
        <begin position="1"/>
        <end position="172"/>
    </location>
</feature>
<feature type="topological domain" description="Cytoplasmic" evidence="4">
    <location>
        <begin position="1"/>
        <end position="14"/>
    </location>
</feature>
<feature type="transmembrane region" description="Helical; Signal-anchor for type II membrane protein" evidence="3">
    <location>
        <begin position="15"/>
        <end position="35"/>
    </location>
</feature>
<feature type="topological domain" description="Lumenal" evidence="4">
    <location>
        <begin position="36"/>
        <end position="172"/>
    </location>
</feature>
<feature type="region of interest" description="C-terminal short (CTS) helix" evidence="2">
    <location>
        <begin position="158"/>
        <end position="169"/>
    </location>
</feature>
<feature type="active site" description="Charge relay system" evidence="1">
    <location>
        <position position="49"/>
    </location>
</feature>
<feature type="active site" description="Charge relay system" evidence="1">
    <location>
        <position position="90"/>
    </location>
</feature>
<feature type="active site" description="Charge relay system" evidence="1">
    <location>
        <position position="115"/>
    </location>
</feature>
<sequence length="172" mass="19143">MLSSLQNPRQAAAQLMNFAMILSTAFMMWKGLSVATDSPSPIVVVLSGSMEPAFQRGDLLLLWNRNVWQETAVGEVVVYNVKGKDIPIVHRVVRKFGTGDKAKLLTKGDNNNADDTDLYARGQDYLEREDIIGSVIGYFPFVGYVTILLSEHPWLKTVMLGIMGLLVVIQRE</sequence>
<name>SEC11_METRA</name>
<evidence type="ECO:0000250" key="1">
    <source>
        <dbReference type="UniProtKB" id="P15367"/>
    </source>
</evidence>
<evidence type="ECO:0000250" key="2">
    <source>
        <dbReference type="UniProtKB" id="P67812"/>
    </source>
</evidence>
<evidence type="ECO:0000255" key="3"/>
<evidence type="ECO:0000305" key="4"/>
<dbReference type="EC" id="3.4.21.89" evidence="1"/>
<dbReference type="EMBL" id="ADNJ02000004">
    <property type="protein sequence ID" value="EFY95900.1"/>
    <property type="molecule type" value="Genomic_DNA"/>
</dbReference>
<dbReference type="RefSeq" id="XP_007824897.1">
    <property type="nucleotide sequence ID" value="XM_007826706.1"/>
</dbReference>
<dbReference type="SMR" id="E9F8V9"/>
<dbReference type="MEROPS" id="S26.010"/>
<dbReference type="GeneID" id="19262994"/>
<dbReference type="KEGG" id="maj:MAA_08708"/>
<dbReference type="HOGENOM" id="CLU_089996_0_0_1"/>
<dbReference type="OrthoDB" id="10257561at2759"/>
<dbReference type="Proteomes" id="UP000002498">
    <property type="component" value="Unassembled WGS sequence"/>
</dbReference>
<dbReference type="GO" id="GO:0005787">
    <property type="term" value="C:signal peptidase complex"/>
    <property type="evidence" value="ECO:0007669"/>
    <property type="project" value="TreeGrafter"/>
</dbReference>
<dbReference type="GO" id="GO:0004252">
    <property type="term" value="F:serine-type endopeptidase activity"/>
    <property type="evidence" value="ECO:0007669"/>
    <property type="project" value="UniProtKB-EC"/>
</dbReference>
<dbReference type="GO" id="GO:0006465">
    <property type="term" value="P:signal peptide processing"/>
    <property type="evidence" value="ECO:0007669"/>
    <property type="project" value="InterPro"/>
</dbReference>
<dbReference type="CDD" id="cd06530">
    <property type="entry name" value="S26_SPase_I"/>
    <property type="match status" value="1"/>
</dbReference>
<dbReference type="Gene3D" id="2.10.109.10">
    <property type="entry name" value="Umud Fragment, subunit A"/>
    <property type="match status" value="1"/>
</dbReference>
<dbReference type="InterPro" id="IPR036286">
    <property type="entry name" value="LexA/Signal_pep-like_sf"/>
</dbReference>
<dbReference type="InterPro" id="IPR019756">
    <property type="entry name" value="Pept_S26A_signal_pept_1_Ser-AS"/>
</dbReference>
<dbReference type="InterPro" id="IPR019533">
    <property type="entry name" value="Peptidase_S26"/>
</dbReference>
<dbReference type="InterPro" id="IPR001733">
    <property type="entry name" value="Peptidase_S26B"/>
</dbReference>
<dbReference type="NCBIfam" id="TIGR02228">
    <property type="entry name" value="sigpep_I_arch"/>
    <property type="match status" value="1"/>
</dbReference>
<dbReference type="PANTHER" id="PTHR10806">
    <property type="entry name" value="SIGNAL PEPTIDASE COMPLEX CATALYTIC SUBUNIT SEC11"/>
    <property type="match status" value="1"/>
</dbReference>
<dbReference type="PANTHER" id="PTHR10806:SF6">
    <property type="entry name" value="SIGNAL PEPTIDASE COMPLEX CATALYTIC SUBUNIT SEC11"/>
    <property type="match status" value="1"/>
</dbReference>
<dbReference type="PRINTS" id="PR00728">
    <property type="entry name" value="SIGNALPTASE"/>
</dbReference>
<dbReference type="SUPFAM" id="SSF51306">
    <property type="entry name" value="LexA/Signal peptidase"/>
    <property type="match status" value="1"/>
</dbReference>
<dbReference type="PROSITE" id="PS00501">
    <property type="entry name" value="SPASE_I_1"/>
    <property type="match status" value="1"/>
</dbReference>
<accession>E9F8V9</accession>
<reference key="1">
    <citation type="journal article" date="2011" name="PLoS Genet.">
        <title>Genome sequencing and comparative transcriptomics of the model entomopathogenic fungi Metarhizium anisopliae and M. acridum.</title>
        <authorList>
            <person name="Gao Q."/>
            <person name="Jin K."/>
            <person name="Ying S.-H."/>
            <person name="Zhang Y."/>
            <person name="Xiao G."/>
            <person name="Shang Y."/>
            <person name="Duan Z."/>
            <person name="Hu X."/>
            <person name="Xie X.-Q."/>
            <person name="Zhou G."/>
            <person name="Peng G."/>
            <person name="Luo Z."/>
            <person name="Huang W."/>
            <person name="Wang B."/>
            <person name="Fang W."/>
            <person name="Wang S."/>
            <person name="Zhong Y."/>
            <person name="Ma L.-J."/>
            <person name="St Leger R.J."/>
            <person name="Zhao G.-P."/>
            <person name="Pei Y."/>
            <person name="Feng M.-G."/>
            <person name="Xia Y."/>
            <person name="Wang C."/>
        </authorList>
    </citation>
    <scope>NUCLEOTIDE SEQUENCE [LARGE SCALE GENOMIC DNA]</scope>
    <source>
        <strain>ARSEF 23 / ATCC MYA-3075</strain>
    </source>
</reference>
<reference key="2">
    <citation type="journal article" date="2014" name="Proc. Natl. Acad. Sci. U.S.A.">
        <title>Trajectory and genomic determinants of fungal-pathogen speciation and host adaptation.</title>
        <authorList>
            <person name="Hu X."/>
            <person name="Xiao G."/>
            <person name="Zheng P."/>
            <person name="Shang Y."/>
            <person name="Su Y."/>
            <person name="Zhang X."/>
            <person name="Liu X."/>
            <person name="Zhan S."/>
            <person name="St Leger R.J."/>
            <person name="Wang C."/>
        </authorList>
    </citation>
    <scope>GENOME REANNOTATION</scope>
    <source>
        <strain>ARSEF 23 / ATCC MYA-3075</strain>
    </source>
</reference>
<gene>
    <name type="primary">SEC11</name>
    <name type="ORF">MAA_08708</name>
</gene>
<keyword id="KW-0256">Endoplasmic reticulum</keyword>
<keyword id="KW-0378">Hydrolase</keyword>
<keyword id="KW-0472">Membrane</keyword>
<keyword id="KW-0645">Protease</keyword>
<keyword id="KW-0735">Signal-anchor</keyword>
<keyword id="KW-0812">Transmembrane</keyword>
<keyword id="KW-1133">Transmembrane helix</keyword>
<proteinExistence type="inferred from homology"/>
<organism>
    <name type="scientific">Metarhizium robertsii (strain ARSEF 23 / ATCC MYA-3075)</name>
    <name type="common">Metarhizium anisopliae (strain ARSEF 23)</name>
    <dbReference type="NCBI Taxonomy" id="655844"/>
    <lineage>
        <taxon>Eukaryota</taxon>
        <taxon>Fungi</taxon>
        <taxon>Dikarya</taxon>
        <taxon>Ascomycota</taxon>
        <taxon>Pezizomycotina</taxon>
        <taxon>Sordariomycetes</taxon>
        <taxon>Hypocreomycetidae</taxon>
        <taxon>Hypocreales</taxon>
        <taxon>Clavicipitaceae</taxon>
        <taxon>Metarhizium</taxon>
    </lineage>
</organism>
<protein>
    <recommendedName>
        <fullName>Signal peptidase complex catalytic subunit SEC11</fullName>
        <ecNumber evidence="1">3.4.21.89</ecNumber>
    </recommendedName>
    <alternativeName>
        <fullName>Signal peptidase I</fullName>
    </alternativeName>
</protein>